<comment type="function">
    <text evidence="1">Catalyzes the excision of an oxidatively damaged form of guanine (7,8-dihydro-8-oxoguanine = 8-oxoG) from DNA. Also cleaves the DNA backbone at apurinic/apyrimidinic sites (AP sites).</text>
</comment>
<comment type="catalytic activity">
    <reaction evidence="1">
        <text>2'-deoxyribonucleotide-(2'-deoxyribose 5'-phosphate)-2'-deoxyribonucleotide-DNA = a 3'-end 2'-deoxyribonucleotide-(2,3-dehydro-2,3-deoxyribose 5'-phosphate)-DNA + a 5'-end 5'-phospho-2'-deoxyribonucleoside-DNA + H(+)</text>
        <dbReference type="Rhea" id="RHEA:66592"/>
        <dbReference type="Rhea" id="RHEA-COMP:13180"/>
        <dbReference type="Rhea" id="RHEA-COMP:16897"/>
        <dbReference type="Rhea" id="RHEA-COMP:17067"/>
        <dbReference type="ChEBI" id="CHEBI:15378"/>
        <dbReference type="ChEBI" id="CHEBI:136412"/>
        <dbReference type="ChEBI" id="CHEBI:157695"/>
        <dbReference type="ChEBI" id="CHEBI:167181"/>
        <dbReference type="EC" id="4.2.99.18"/>
    </reaction>
</comment>
<comment type="similarity">
    <text evidence="1">Belongs to the type-2 OGG1 family.</text>
</comment>
<sequence length="207" mass="24253">MLRSLVQNPKVRARVLERVDEFRLNNLSNEEVWFRELTLCLLTANSSFISAYQALNCLGQKIYYANEEEIRNILKSCKYRFYNLKAKYIIMAREKVYGRLKEEIKPLADEDQQLARERLLNIKGIGMKEASHFLRNVGYFDLAIIDRHIIDFMRRIGAIGETNVKQLSKSLYISFENILKSIASNLNMSVGILDLFIWYKETNTIVK</sequence>
<keyword id="KW-0002">3D-structure</keyword>
<keyword id="KW-0227">DNA damage</keyword>
<keyword id="KW-0234">DNA repair</keyword>
<keyword id="KW-0326">Glycosidase</keyword>
<keyword id="KW-0378">Hydrolase</keyword>
<keyword id="KW-0456">Lyase</keyword>
<keyword id="KW-0511">Multifunctional enzyme</keyword>
<keyword id="KW-1185">Reference proteome</keyword>
<feature type="chain" id="PRO_0000159566" description="8-oxoguanine DNA glycosylase/AP lyase">
    <location>
        <begin position="1"/>
        <end position="207"/>
    </location>
</feature>
<feature type="active site" evidence="1 5">
    <location>
        <position position="128"/>
    </location>
</feature>
<feature type="active site" evidence="1 5">
    <location>
        <position position="146"/>
    </location>
</feature>
<feature type="site" description="Important for guanine/8-oxoguanine distinction" evidence="1 2">
    <location>
        <position position="207"/>
    </location>
</feature>
<feature type="helix" evidence="7">
    <location>
        <begin position="3"/>
        <end position="7"/>
    </location>
</feature>
<feature type="helix" evidence="7">
    <location>
        <begin position="9"/>
        <end position="26"/>
    </location>
</feature>
<feature type="helix" evidence="7">
    <location>
        <begin position="30"/>
        <end position="43"/>
    </location>
</feature>
<feature type="helix" evidence="7">
    <location>
        <begin position="48"/>
        <end position="58"/>
    </location>
</feature>
<feature type="helix" evidence="7">
    <location>
        <begin position="59"/>
        <end position="63"/>
    </location>
</feature>
<feature type="helix" evidence="7">
    <location>
        <begin position="67"/>
        <end position="76"/>
    </location>
</feature>
<feature type="helix" evidence="7">
    <location>
        <begin position="82"/>
        <end position="96"/>
    </location>
</feature>
<feature type="turn" evidence="7">
    <location>
        <begin position="97"/>
        <end position="99"/>
    </location>
</feature>
<feature type="helix" evidence="7">
    <location>
        <begin position="100"/>
        <end position="110"/>
    </location>
</feature>
<feature type="helix" evidence="7">
    <location>
        <begin position="112"/>
        <end position="119"/>
    </location>
</feature>
<feature type="helix" evidence="7">
    <location>
        <begin position="127"/>
        <end position="136"/>
    </location>
</feature>
<feature type="helix" evidence="7">
    <location>
        <begin position="147"/>
        <end position="155"/>
    </location>
</feature>
<feature type="helix" evidence="7">
    <location>
        <begin position="169"/>
        <end position="185"/>
    </location>
</feature>
<feature type="helix" evidence="7">
    <location>
        <begin position="190"/>
        <end position="202"/>
    </location>
</feature>
<proteinExistence type="evidence at protein level"/>
<reference key="1">
    <citation type="journal article" date="2001" name="Proc. Natl. Acad. Sci. U.S.A.">
        <title>The complete genome of the crenarchaeon Sulfolobus solfataricus P2.</title>
        <authorList>
            <person name="She Q."/>
            <person name="Singh R.K."/>
            <person name="Confalonieri F."/>
            <person name="Zivanovic Y."/>
            <person name="Allard G."/>
            <person name="Awayez M.J."/>
            <person name="Chan-Weiher C.C.-Y."/>
            <person name="Clausen I.G."/>
            <person name="Curtis B.A."/>
            <person name="De Moors A."/>
            <person name="Erauso G."/>
            <person name="Fletcher C."/>
            <person name="Gordon P.M.K."/>
            <person name="Heikamp-de Jong I."/>
            <person name="Jeffries A.C."/>
            <person name="Kozera C.J."/>
            <person name="Medina N."/>
            <person name="Peng X."/>
            <person name="Thi-Ngoc H.P."/>
            <person name="Redder P."/>
            <person name="Schenk M.E."/>
            <person name="Theriault C."/>
            <person name="Tolstrup N."/>
            <person name="Charlebois R.L."/>
            <person name="Doolittle W.F."/>
            <person name="Duguet M."/>
            <person name="Gaasterland T."/>
            <person name="Garrett R.A."/>
            <person name="Ragan M.A."/>
            <person name="Sensen C.W."/>
            <person name="Van der Oost J."/>
        </authorList>
    </citation>
    <scope>NUCLEOTIDE SEQUENCE [LARGE SCALE GENOMIC DNA]</scope>
    <source>
        <strain>ATCC 35092 / DSM 1617 / JCM 11322 / P2</strain>
    </source>
</reference>
<reference evidence="6" key="2">
    <citation type="journal article" date="2009" name="Structure">
        <title>Crystal structures of two archaeal 8-oxoguanine DNA glycosylases provide structural insight into guanine/8-oxoguanine distinction.</title>
        <authorList>
            <person name="Faucher F."/>
            <person name="Duclos S."/>
            <person name="Bandaru V."/>
            <person name="Wallace S.S."/>
            <person name="Doublie S."/>
        </authorList>
    </citation>
    <scope>X-RAY CRYSTALLOGRAPHY (1.90 ANGSTROMS) OF MUTANT GLN-128</scope>
    <scope>ACTIVE SITE</scope>
</reference>
<evidence type="ECO:0000255" key="1">
    <source>
        <dbReference type="HAMAP-Rule" id="MF_00241"/>
    </source>
</evidence>
<evidence type="ECO:0000269" key="2">
    <source>
    </source>
</evidence>
<evidence type="ECO:0000303" key="3">
    <source>
    </source>
</evidence>
<evidence type="ECO:0000305" key="4"/>
<evidence type="ECO:0000305" key="5">
    <source>
    </source>
</evidence>
<evidence type="ECO:0007744" key="6">
    <source>
        <dbReference type="PDB" id="3FHG"/>
    </source>
</evidence>
<evidence type="ECO:0007829" key="7">
    <source>
        <dbReference type="PDB" id="3FHG"/>
    </source>
</evidence>
<name>OGG1_SACS2</name>
<protein>
    <recommendedName>
        <fullName evidence="1 4">8-oxoguanine DNA glycosylase/AP lyase</fullName>
    </recommendedName>
    <domain>
        <recommendedName>
            <fullName evidence="1 3">8-oxoguanine DNA glycosylase</fullName>
            <shortName evidence="1">8-oxoG DNA glycosylase</shortName>
            <ecNumber evidence="1">3.2.2.-</ecNumber>
        </recommendedName>
    </domain>
    <domain>
        <recommendedName>
            <fullName evidence="1">DNA-(apurinic or apyrimidinic site) lyase</fullName>
            <shortName evidence="1">AP lyase</shortName>
            <ecNumber evidence="1">4.2.99.18</ecNumber>
        </recommendedName>
    </domain>
</protein>
<dbReference type="EC" id="3.2.2.-" evidence="1"/>
<dbReference type="EC" id="4.2.99.18" evidence="1"/>
<dbReference type="EMBL" id="AE006641">
    <property type="protein sequence ID" value="AAK41186.1"/>
    <property type="molecule type" value="Genomic_DNA"/>
</dbReference>
<dbReference type="PIR" id="C90241">
    <property type="entry name" value="C90241"/>
</dbReference>
<dbReference type="RefSeq" id="WP_009992328.1">
    <property type="nucleotide sequence ID" value="NC_002754.1"/>
</dbReference>
<dbReference type="PDB" id="3FHG">
    <property type="method" value="X-ray"/>
    <property type="resolution" value="1.90 A"/>
    <property type="chains" value="A=1-207"/>
</dbReference>
<dbReference type="PDBsum" id="3FHG"/>
<dbReference type="SMR" id="Q97ZK2"/>
<dbReference type="STRING" id="273057.SSO0904"/>
<dbReference type="PaxDb" id="273057-SSO0904"/>
<dbReference type="EnsemblBacteria" id="AAK41186">
    <property type="protein sequence ID" value="AAK41186"/>
    <property type="gene ID" value="SSO0904"/>
</dbReference>
<dbReference type="KEGG" id="sso:SSO0904"/>
<dbReference type="PATRIC" id="fig|273057.12.peg.906"/>
<dbReference type="eggNOG" id="arCOG04357">
    <property type="taxonomic scope" value="Archaea"/>
</dbReference>
<dbReference type="HOGENOM" id="CLU_104937_0_0_2"/>
<dbReference type="InParanoid" id="Q97ZK2"/>
<dbReference type="PhylomeDB" id="Q97ZK2"/>
<dbReference type="BRENDA" id="3.2.2.B5">
    <property type="organism ID" value="6163"/>
</dbReference>
<dbReference type="EvolutionaryTrace" id="Q97ZK2"/>
<dbReference type="Proteomes" id="UP000001974">
    <property type="component" value="Chromosome"/>
</dbReference>
<dbReference type="GO" id="GO:0140078">
    <property type="term" value="F:class I DNA-(apurinic or apyrimidinic site) endonuclease activity"/>
    <property type="evidence" value="ECO:0007669"/>
    <property type="project" value="UniProtKB-EC"/>
</dbReference>
<dbReference type="GO" id="GO:0016799">
    <property type="term" value="F:hydrolase activity, hydrolyzing N-glycosyl compounds"/>
    <property type="evidence" value="ECO:0007669"/>
    <property type="project" value="UniProtKB-UniRule"/>
</dbReference>
<dbReference type="GO" id="GO:0006284">
    <property type="term" value="P:base-excision repair"/>
    <property type="evidence" value="ECO:0007669"/>
    <property type="project" value="UniProtKB-UniRule"/>
</dbReference>
<dbReference type="CDD" id="cd00056">
    <property type="entry name" value="ENDO3c"/>
    <property type="match status" value="1"/>
</dbReference>
<dbReference type="Gene3D" id="1.10.1670.10">
    <property type="entry name" value="Helix-hairpin-Helix base-excision DNA repair enzymes (C-terminal)"/>
    <property type="match status" value="1"/>
</dbReference>
<dbReference type="Gene3D" id="1.10.340.30">
    <property type="entry name" value="Hypothetical protein, domain 2"/>
    <property type="match status" value="1"/>
</dbReference>
<dbReference type="HAMAP" id="MF_00241">
    <property type="entry name" value="Ogg"/>
    <property type="match status" value="1"/>
</dbReference>
<dbReference type="InterPro" id="IPR012092">
    <property type="entry name" value="DNA_glyclase/AP_lyase_Ogg"/>
</dbReference>
<dbReference type="InterPro" id="IPR011257">
    <property type="entry name" value="DNA_glycosylase"/>
</dbReference>
<dbReference type="InterPro" id="IPR003265">
    <property type="entry name" value="HhH-GPD_domain"/>
</dbReference>
<dbReference type="InterPro" id="IPR023170">
    <property type="entry name" value="HhH_base_excis_C"/>
</dbReference>
<dbReference type="NCBIfam" id="NF002305">
    <property type="entry name" value="PRK01229.1"/>
    <property type="match status" value="1"/>
</dbReference>
<dbReference type="Pfam" id="PF22175">
    <property type="entry name" value="Ogg-HhH"/>
    <property type="match status" value="1"/>
</dbReference>
<dbReference type="PIRSF" id="PIRSF005954">
    <property type="entry name" value="Thrmst_ogg"/>
    <property type="match status" value="1"/>
</dbReference>
<dbReference type="SMART" id="SM00478">
    <property type="entry name" value="ENDO3c"/>
    <property type="match status" value="1"/>
</dbReference>
<dbReference type="SUPFAM" id="SSF48150">
    <property type="entry name" value="DNA-glycosylase"/>
    <property type="match status" value="1"/>
</dbReference>
<gene>
    <name evidence="1 3" type="primary">ogg</name>
    <name type="ordered locus">SSO0904</name>
</gene>
<organism>
    <name type="scientific">Saccharolobus solfataricus (strain ATCC 35092 / DSM 1617 / JCM 11322 / P2)</name>
    <name type="common">Sulfolobus solfataricus</name>
    <dbReference type="NCBI Taxonomy" id="273057"/>
    <lineage>
        <taxon>Archaea</taxon>
        <taxon>Thermoproteota</taxon>
        <taxon>Thermoprotei</taxon>
        <taxon>Sulfolobales</taxon>
        <taxon>Sulfolobaceae</taxon>
        <taxon>Saccharolobus</taxon>
    </lineage>
</organism>
<accession>Q97ZK2</accession>